<evidence type="ECO:0000255" key="1">
    <source>
        <dbReference type="HAMAP-Rule" id="MF_00060"/>
    </source>
</evidence>
<name>SURE_VIBVU</name>
<feature type="chain" id="PRO_0000111851" description="5'-nucleotidase SurE">
    <location>
        <begin position="1"/>
        <end position="255"/>
    </location>
</feature>
<feature type="binding site" evidence="1">
    <location>
        <position position="16"/>
    </location>
    <ligand>
        <name>a divalent metal cation</name>
        <dbReference type="ChEBI" id="CHEBI:60240"/>
    </ligand>
</feature>
<feature type="binding site" evidence="1">
    <location>
        <position position="17"/>
    </location>
    <ligand>
        <name>a divalent metal cation</name>
        <dbReference type="ChEBI" id="CHEBI:60240"/>
    </ligand>
</feature>
<feature type="binding site" evidence="1">
    <location>
        <position position="47"/>
    </location>
    <ligand>
        <name>a divalent metal cation</name>
        <dbReference type="ChEBI" id="CHEBI:60240"/>
    </ligand>
</feature>
<feature type="binding site" evidence="1">
    <location>
        <position position="100"/>
    </location>
    <ligand>
        <name>a divalent metal cation</name>
        <dbReference type="ChEBI" id="CHEBI:60240"/>
    </ligand>
</feature>
<organism>
    <name type="scientific">Vibrio vulnificus (strain CMCP6)</name>
    <dbReference type="NCBI Taxonomy" id="216895"/>
    <lineage>
        <taxon>Bacteria</taxon>
        <taxon>Pseudomonadati</taxon>
        <taxon>Pseudomonadota</taxon>
        <taxon>Gammaproteobacteria</taxon>
        <taxon>Vibrionales</taxon>
        <taxon>Vibrionaceae</taxon>
        <taxon>Vibrio</taxon>
    </lineage>
</organism>
<accession>Q8DC57</accession>
<keyword id="KW-0963">Cytoplasm</keyword>
<keyword id="KW-0378">Hydrolase</keyword>
<keyword id="KW-0479">Metal-binding</keyword>
<keyword id="KW-0547">Nucleotide-binding</keyword>
<sequence length="255" mass="28061">MEDKQAKPLRILLSNDDGVFAEGIRTLASELRTLAEVIIVAPDRNRSGASNSLTLEQPLRVTCVEENVYSVQGTPTDCVHFALNELLKNDLPDLVLSGINHGANLGDDVLYSGTVAAAMEGHFLGVQSIAFSLVGKTHFKTAATIAKRIVEQHLAKPIPTNRLLNINIPDLPLEQLEEIRVTRLGARHHAENMIKQLDPRGHEIYWLGPPGKEQDAGEGTDFHAIEQGYVSITPLQVDLTAHESLRAMDTWLKEK</sequence>
<proteinExistence type="inferred from homology"/>
<gene>
    <name evidence="1" type="primary">surE</name>
    <name type="ordered locus">VV1_1585</name>
</gene>
<comment type="function">
    <text evidence="1">Nucleotidase that shows phosphatase activity on nucleoside 5'-monophosphates.</text>
</comment>
<comment type="catalytic activity">
    <reaction evidence="1">
        <text>a ribonucleoside 5'-phosphate + H2O = a ribonucleoside + phosphate</text>
        <dbReference type="Rhea" id="RHEA:12484"/>
        <dbReference type="ChEBI" id="CHEBI:15377"/>
        <dbReference type="ChEBI" id="CHEBI:18254"/>
        <dbReference type="ChEBI" id="CHEBI:43474"/>
        <dbReference type="ChEBI" id="CHEBI:58043"/>
        <dbReference type="EC" id="3.1.3.5"/>
    </reaction>
</comment>
<comment type="cofactor">
    <cofactor evidence="1">
        <name>a divalent metal cation</name>
        <dbReference type="ChEBI" id="CHEBI:60240"/>
    </cofactor>
    <text evidence="1">Binds 1 divalent metal cation per subunit.</text>
</comment>
<comment type="subcellular location">
    <subcellularLocation>
        <location evidence="1">Cytoplasm</location>
    </subcellularLocation>
</comment>
<comment type="similarity">
    <text evidence="1">Belongs to the SurE nucleotidase family.</text>
</comment>
<dbReference type="EC" id="3.1.3.5" evidence="1"/>
<dbReference type="EMBL" id="AE016795">
    <property type="protein sequence ID" value="AAO10008.1"/>
    <property type="molecule type" value="Genomic_DNA"/>
</dbReference>
<dbReference type="RefSeq" id="WP_011079518.1">
    <property type="nucleotide sequence ID" value="NC_004459.3"/>
</dbReference>
<dbReference type="SMR" id="Q8DC57"/>
<dbReference type="KEGG" id="vvu:VV1_1585"/>
<dbReference type="HOGENOM" id="CLU_045192_1_2_6"/>
<dbReference type="Proteomes" id="UP000002275">
    <property type="component" value="Chromosome 1"/>
</dbReference>
<dbReference type="GO" id="GO:0005737">
    <property type="term" value="C:cytoplasm"/>
    <property type="evidence" value="ECO:0007669"/>
    <property type="project" value="UniProtKB-SubCell"/>
</dbReference>
<dbReference type="GO" id="GO:0008254">
    <property type="term" value="F:3'-nucleotidase activity"/>
    <property type="evidence" value="ECO:0007669"/>
    <property type="project" value="TreeGrafter"/>
</dbReference>
<dbReference type="GO" id="GO:0008253">
    <property type="term" value="F:5'-nucleotidase activity"/>
    <property type="evidence" value="ECO:0007669"/>
    <property type="project" value="UniProtKB-UniRule"/>
</dbReference>
<dbReference type="GO" id="GO:0004309">
    <property type="term" value="F:exopolyphosphatase activity"/>
    <property type="evidence" value="ECO:0007669"/>
    <property type="project" value="TreeGrafter"/>
</dbReference>
<dbReference type="GO" id="GO:0046872">
    <property type="term" value="F:metal ion binding"/>
    <property type="evidence" value="ECO:0007669"/>
    <property type="project" value="UniProtKB-UniRule"/>
</dbReference>
<dbReference type="GO" id="GO:0000166">
    <property type="term" value="F:nucleotide binding"/>
    <property type="evidence" value="ECO:0007669"/>
    <property type="project" value="UniProtKB-KW"/>
</dbReference>
<dbReference type="FunFam" id="3.40.1210.10:FF:000001">
    <property type="entry name" value="5'/3'-nucleotidase SurE"/>
    <property type="match status" value="1"/>
</dbReference>
<dbReference type="Gene3D" id="3.40.1210.10">
    <property type="entry name" value="Survival protein SurE-like phosphatase/nucleotidase"/>
    <property type="match status" value="1"/>
</dbReference>
<dbReference type="HAMAP" id="MF_00060">
    <property type="entry name" value="SurE"/>
    <property type="match status" value="1"/>
</dbReference>
<dbReference type="InterPro" id="IPR030048">
    <property type="entry name" value="SurE"/>
</dbReference>
<dbReference type="InterPro" id="IPR002828">
    <property type="entry name" value="SurE-like_Pase/nucleotidase"/>
</dbReference>
<dbReference type="InterPro" id="IPR036523">
    <property type="entry name" value="SurE-like_sf"/>
</dbReference>
<dbReference type="NCBIfam" id="NF001489">
    <property type="entry name" value="PRK00346.1-3"/>
    <property type="match status" value="1"/>
</dbReference>
<dbReference type="NCBIfam" id="NF001490">
    <property type="entry name" value="PRK00346.1-4"/>
    <property type="match status" value="1"/>
</dbReference>
<dbReference type="NCBIfam" id="NF001492">
    <property type="entry name" value="PRK00346.2-2"/>
    <property type="match status" value="1"/>
</dbReference>
<dbReference type="NCBIfam" id="TIGR00087">
    <property type="entry name" value="surE"/>
    <property type="match status" value="1"/>
</dbReference>
<dbReference type="PANTHER" id="PTHR30457">
    <property type="entry name" value="5'-NUCLEOTIDASE SURE"/>
    <property type="match status" value="1"/>
</dbReference>
<dbReference type="PANTHER" id="PTHR30457:SF12">
    <property type="entry name" value="5'_3'-NUCLEOTIDASE SURE"/>
    <property type="match status" value="1"/>
</dbReference>
<dbReference type="Pfam" id="PF01975">
    <property type="entry name" value="SurE"/>
    <property type="match status" value="1"/>
</dbReference>
<dbReference type="SUPFAM" id="SSF64167">
    <property type="entry name" value="SurE-like"/>
    <property type="match status" value="1"/>
</dbReference>
<reference key="1">
    <citation type="submission" date="2002-12" db="EMBL/GenBank/DDBJ databases">
        <title>Complete genome sequence of Vibrio vulnificus CMCP6.</title>
        <authorList>
            <person name="Rhee J.H."/>
            <person name="Kim S.Y."/>
            <person name="Chung S.S."/>
            <person name="Kim J.J."/>
            <person name="Moon Y.H."/>
            <person name="Jeong H."/>
            <person name="Choy H.E."/>
        </authorList>
    </citation>
    <scope>NUCLEOTIDE SEQUENCE [LARGE SCALE GENOMIC DNA]</scope>
    <source>
        <strain>CMCP6</strain>
    </source>
</reference>
<protein>
    <recommendedName>
        <fullName evidence="1">5'-nucleotidase SurE</fullName>
        <ecNumber evidence="1">3.1.3.5</ecNumber>
    </recommendedName>
    <alternativeName>
        <fullName evidence="1">Nucleoside 5'-monophosphate phosphohydrolase</fullName>
    </alternativeName>
</protein>